<accession>P24499</accession>
<keyword id="KW-0002">3D-structure</keyword>
<keyword id="KW-0066">ATP synthesis</keyword>
<keyword id="KW-0138">CF(0)</keyword>
<keyword id="KW-0375">Hydrogen ion transport</keyword>
<keyword id="KW-0406">Ion transport</keyword>
<keyword id="KW-0472">Membrane</keyword>
<keyword id="KW-0496">Mitochondrion</keyword>
<keyword id="KW-0999">Mitochondrion inner membrane</keyword>
<keyword id="KW-0812">Transmembrane</keyword>
<keyword id="KW-1133">Transmembrane helix</keyword>
<keyword id="KW-0813">Transport</keyword>
<sequence>MFLFFFCDLFWLRLLLCMYYCVSRLCFIVYFNCLMLIFDFLLFCLFDLYLFVGLCLFLLLWFMLFNLYSLILYYCITYLNLYLLFCIVFLLYIAFLFLFCFLCDFFLFNNLLVGDSFMDVFFIRFLLCFLECFSLLCRCLSTFLRLFCNLLSSHFLLLMFFDFFYFIFVFFFYGVFCYFILFIFVFCFCLLFYVFLYLLDLFAAILQLFIFCNMILQLIMDFLLFLLFV</sequence>
<organism>
    <name type="scientific">Trypanosoma brucei brucei</name>
    <dbReference type="NCBI Taxonomy" id="5702"/>
    <lineage>
        <taxon>Eukaryota</taxon>
        <taxon>Discoba</taxon>
        <taxon>Euglenozoa</taxon>
        <taxon>Kinetoplastea</taxon>
        <taxon>Metakinetoplastina</taxon>
        <taxon>Trypanosomatida</taxon>
        <taxon>Trypanosomatidae</taxon>
        <taxon>Trypanosoma</taxon>
    </lineage>
</organism>
<proteinExistence type="evidence at protein level"/>
<gene>
    <name type="primary">ATP6</name>
    <name type="synonym">MURF4</name>
</gene>
<protein>
    <recommendedName>
        <fullName>ATP synthase subunit a</fullName>
    </recommendedName>
    <alternativeName>
        <fullName>F-ATPase protein 6</fullName>
    </alternativeName>
</protein>
<dbReference type="EMBL" id="M33228">
    <property type="protein sequence ID" value="AAA97428.1"/>
    <property type="status" value="ALT_SEQ"/>
    <property type="molecule type" value="mRNA"/>
</dbReference>
<dbReference type="PDB" id="8AP6">
    <property type="method" value="EM"/>
    <property type="resolution" value="3.20 A"/>
    <property type="chains" value="A/a=1-229"/>
</dbReference>
<dbReference type="PDB" id="8AP7">
    <property type="method" value="EM"/>
    <property type="resolution" value="2.70 A"/>
    <property type="chains" value="A/a=1-229"/>
</dbReference>
<dbReference type="PDB" id="8APA">
    <property type="method" value="EM"/>
    <property type="resolution" value="3.70 A"/>
    <property type="chains" value="a=1-229"/>
</dbReference>
<dbReference type="PDB" id="8APB">
    <property type="method" value="EM"/>
    <property type="resolution" value="3.80 A"/>
    <property type="chains" value="a=1-229"/>
</dbReference>
<dbReference type="PDB" id="8APC">
    <property type="method" value="EM"/>
    <property type="resolution" value="3.50 A"/>
    <property type="chains" value="a=1-229"/>
</dbReference>
<dbReference type="PDB" id="8APD">
    <property type="method" value="EM"/>
    <property type="resolution" value="3.70 A"/>
    <property type="chains" value="a=1-229"/>
</dbReference>
<dbReference type="PDB" id="8APE">
    <property type="method" value="EM"/>
    <property type="resolution" value="3.70 A"/>
    <property type="chains" value="a=1-229"/>
</dbReference>
<dbReference type="PDB" id="8APF">
    <property type="method" value="EM"/>
    <property type="resolution" value="4.30 A"/>
    <property type="chains" value="a=1-229"/>
</dbReference>
<dbReference type="PDB" id="8APG">
    <property type="method" value="EM"/>
    <property type="resolution" value="3.50 A"/>
    <property type="chains" value="a=1-229"/>
</dbReference>
<dbReference type="PDB" id="8APH">
    <property type="method" value="EM"/>
    <property type="resolution" value="3.80 A"/>
    <property type="chains" value="a=1-229"/>
</dbReference>
<dbReference type="PDB" id="8APJ">
    <property type="method" value="EM"/>
    <property type="resolution" value="3.80 A"/>
    <property type="chains" value="a=1-229"/>
</dbReference>
<dbReference type="PDB" id="8APK">
    <property type="method" value="EM"/>
    <property type="resolution" value="3.70 A"/>
    <property type="chains" value="a=1-229"/>
</dbReference>
<dbReference type="PDBsum" id="8AP6"/>
<dbReference type="PDBsum" id="8AP7"/>
<dbReference type="PDBsum" id="8APA"/>
<dbReference type="PDBsum" id="8APB"/>
<dbReference type="PDBsum" id="8APC"/>
<dbReference type="PDBsum" id="8APD"/>
<dbReference type="PDBsum" id="8APE"/>
<dbReference type="PDBsum" id="8APF"/>
<dbReference type="PDBsum" id="8APG"/>
<dbReference type="PDBsum" id="8APH"/>
<dbReference type="PDBsum" id="8APJ"/>
<dbReference type="PDBsum" id="8APK"/>
<dbReference type="EMDB" id="EMD-15559"/>
<dbReference type="EMDB" id="EMD-15560"/>
<dbReference type="EMDB" id="EMD-15563"/>
<dbReference type="EMDB" id="EMD-15564"/>
<dbReference type="EMDB" id="EMD-15565"/>
<dbReference type="EMDB" id="EMD-15566"/>
<dbReference type="EMDB" id="EMD-15567"/>
<dbReference type="EMDB" id="EMD-15568"/>
<dbReference type="EMDB" id="EMD-15570"/>
<dbReference type="EMDB" id="EMD-15571"/>
<dbReference type="EMDB" id="EMD-15572"/>
<dbReference type="EMDB" id="EMD-15573"/>
<dbReference type="SMR" id="P24499"/>
<dbReference type="GO" id="GO:0005743">
    <property type="term" value="C:mitochondrial inner membrane"/>
    <property type="evidence" value="ECO:0007669"/>
    <property type="project" value="UniProtKB-SubCell"/>
</dbReference>
<dbReference type="GO" id="GO:0045259">
    <property type="term" value="C:proton-transporting ATP synthase complex"/>
    <property type="evidence" value="ECO:0007669"/>
    <property type="project" value="UniProtKB-KW"/>
</dbReference>
<dbReference type="GO" id="GO:0006754">
    <property type="term" value="P:ATP biosynthetic process"/>
    <property type="evidence" value="ECO:0007669"/>
    <property type="project" value="UniProtKB-KW"/>
</dbReference>
<dbReference type="GO" id="GO:1902600">
    <property type="term" value="P:proton transmembrane transport"/>
    <property type="evidence" value="ECO:0007669"/>
    <property type="project" value="UniProtKB-KW"/>
</dbReference>
<name>ATP6_TRYBB</name>
<reference key="1">
    <citation type="journal article" date="1990" name="Cell">
        <title>An extensively edited mitochondrial transcript in kinetoplastids encodes a protein homologous to ATPase subunit 6.</title>
        <authorList>
            <person name="Bhat G.J."/>
            <person name="Koslowsky D.J."/>
            <person name="Feagin J.E."/>
            <person name="Smiley B.L."/>
            <person name="Stuart K."/>
        </authorList>
    </citation>
    <scope>NUCLEOTIDE SEQUENCE [MRNA]</scope>
</reference>
<comment type="function">
    <text>Mitochondrial membrane ATP synthase (F(1)F(0) ATP synthase or Complex V) produces ATP from ADP in the presence of a proton gradient across the membrane which is generated by electron transport complexes of the respiratory chain. F-type ATPases consist of two structural domains, F(1) - containing the extramembraneous catalytic core and F(0) - containing the membrane proton channel, linked together by a central stalk and a peripheral stalk. During catalysis, ATP synthesis in the catalytic domain of F(1) is coupled via a rotary mechanism of the central stalk subunits to proton translocation. Key component of the proton channel; it may play a direct role in the translocation of protons across the membrane.</text>
</comment>
<comment type="subunit">
    <text>F-type ATPases have 2 components, CF(1) - the catalytic core - and CF(0) - the membrane proton channel. CF(1) has five subunits: alpha(3), beta(3), gamma(1), delta(1), epsilon(1). CF(0) has three main subunits: a, b and c.</text>
</comment>
<comment type="subcellular location">
    <subcellularLocation>
        <location>Mitochondrion inner membrane</location>
        <topology>Multi-pass membrane protein</topology>
    </subcellularLocation>
</comment>
<comment type="similarity">
    <text evidence="2">Belongs to the ATPase A chain family.</text>
</comment>
<evidence type="ECO:0000255" key="1"/>
<evidence type="ECO:0000305" key="2"/>
<feature type="chain" id="PRO_0000082181" description="ATP synthase subunit a">
    <location>
        <begin position="1"/>
        <end position="229"/>
    </location>
</feature>
<feature type="transmembrane region" description="Helical" evidence="1">
    <location>
        <begin position="24"/>
        <end position="44"/>
    </location>
</feature>
<feature type="transmembrane region" description="Helical" evidence="1">
    <location>
        <begin position="45"/>
        <end position="65"/>
    </location>
</feature>
<feature type="transmembrane region" description="Helical" evidence="1">
    <location>
        <begin position="83"/>
        <end position="103"/>
    </location>
</feature>
<feature type="transmembrane region" description="Helical" evidence="1">
    <location>
        <begin position="117"/>
        <end position="137"/>
    </location>
</feature>
<feature type="transmembrane region" description="Helical" evidence="1">
    <location>
        <begin position="143"/>
        <end position="163"/>
    </location>
</feature>
<feature type="transmembrane region" description="Helical" evidence="1">
    <location>
        <begin position="177"/>
        <end position="199"/>
    </location>
</feature>
<feature type="transmembrane region" description="Helical" evidence="1">
    <location>
        <begin position="206"/>
        <end position="228"/>
    </location>
</feature>
<geneLocation type="mitochondrion"/>